<name>OBG_STRCO</name>
<feature type="chain" id="PRO_0000386323" description="GTPase Obg">
    <location>
        <begin position="1"/>
        <end position="478"/>
    </location>
</feature>
<feature type="domain" description="Obg" evidence="3">
    <location>
        <begin position="2"/>
        <end position="159"/>
    </location>
</feature>
<feature type="domain" description="OBG-type G" evidence="1">
    <location>
        <begin position="160"/>
        <end position="330"/>
    </location>
</feature>
<feature type="domain" description="OCT" evidence="2">
    <location>
        <begin position="348"/>
        <end position="430"/>
    </location>
</feature>
<feature type="region of interest" description="Disordered" evidence="4">
    <location>
        <begin position="60"/>
        <end position="88"/>
    </location>
</feature>
<feature type="region of interest" description="Disordered" evidence="4">
    <location>
        <begin position="438"/>
        <end position="478"/>
    </location>
</feature>
<feature type="compositionally biased region" description="Basic and acidic residues" evidence="4">
    <location>
        <begin position="439"/>
        <end position="450"/>
    </location>
</feature>
<feature type="compositionally biased region" description="Basic and acidic residues" evidence="4">
    <location>
        <begin position="457"/>
        <end position="468"/>
    </location>
</feature>
<feature type="compositionally biased region" description="Acidic residues" evidence="4">
    <location>
        <begin position="469"/>
        <end position="478"/>
    </location>
</feature>
<feature type="binding site" evidence="1">
    <location>
        <begin position="166"/>
        <end position="173"/>
    </location>
    <ligand>
        <name>GTP</name>
        <dbReference type="ChEBI" id="CHEBI:37565"/>
    </ligand>
</feature>
<feature type="binding site" evidence="1">
    <location>
        <position position="173"/>
    </location>
    <ligand>
        <name>Mg(2+)</name>
        <dbReference type="ChEBI" id="CHEBI:18420"/>
    </ligand>
</feature>
<feature type="binding site" evidence="1">
    <location>
        <begin position="191"/>
        <end position="195"/>
    </location>
    <ligand>
        <name>GTP</name>
        <dbReference type="ChEBI" id="CHEBI:37565"/>
    </ligand>
</feature>
<feature type="binding site" evidence="1">
    <location>
        <position position="193"/>
    </location>
    <ligand>
        <name>Mg(2+)</name>
        <dbReference type="ChEBI" id="CHEBI:18420"/>
    </ligand>
</feature>
<feature type="binding site" evidence="1">
    <location>
        <begin position="212"/>
        <end position="215"/>
    </location>
    <ligand>
        <name>GTP</name>
        <dbReference type="ChEBI" id="CHEBI:37565"/>
    </ligand>
</feature>
<feature type="binding site" evidence="1">
    <location>
        <begin position="282"/>
        <end position="285"/>
    </location>
    <ligand>
        <name>GTP</name>
        <dbReference type="ChEBI" id="CHEBI:37565"/>
    </ligand>
</feature>
<feature type="binding site" evidence="1">
    <location>
        <begin position="311"/>
        <end position="313"/>
    </location>
    <ligand>
        <name>GTP</name>
        <dbReference type="ChEBI" id="CHEBI:37565"/>
    </ligand>
</feature>
<feature type="mutagenesis site" description="Overexpression suppresses sporulation more than the wild-type gene." evidence="5">
    <original>P</original>
    <variation>V</variation>
    <location>
        <position position="168"/>
    </location>
</feature>
<feature type="mutagenesis site" description="Overexpression enhances aerial mycelium formation, also enhances actinorhodin production." evidence="5">
    <original>G</original>
    <variation>A</variation>
    <location>
        <position position="171"/>
    </location>
</feature>
<feature type="mutagenesis site" description="No phenotype upon overexpression." evidence="5">
    <original>K</original>
    <variation>N</variation>
    <location>
        <position position="172"/>
    </location>
</feature>
<feature type="mutagenesis site" description="No phenotype upon overexpression." evidence="5">
    <original>S</original>
    <variation>N</variation>
    <location>
        <position position="173"/>
    </location>
</feature>
<feature type="mutagenesis site" description="No phenotype upon overexpression." evidence="5">
    <original>L</original>
    <variation>I</variation>
    <location>
        <position position="281"/>
    </location>
</feature>
<feature type="mutagenesis site" description="No phenotype upon overexpression." evidence="5">
    <original>D</original>
    <variation>A</variation>
    <location>
        <position position="285"/>
    </location>
</feature>
<protein>
    <recommendedName>
        <fullName evidence="1">GTPase Obg</fullName>
        <ecNumber evidence="1">3.6.5.-</ecNumber>
    </recommendedName>
    <alternativeName>
        <fullName evidence="1">GTP-binding protein Obg</fullName>
    </alternativeName>
</protein>
<keyword id="KW-1003">Cell membrane</keyword>
<keyword id="KW-0963">Cytoplasm</keyword>
<keyword id="KW-0342">GTP-binding</keyword>
<keyword id="KW-0378">Hydrolase</keyword>
<keyword id="KW-0460">Magnesium</keyword>
<keyword id="KW-0472">Membrane</keyword>
<keyword id="KW-0479">Metal-binding</keyword>
<keyword id="KW-0547">Nucleotide-binding</keyword>
<keyword id="KW-1185">Reference proteome</keyword>
<gene>
    <name evidence="1" type="primary">obg</name>
    <name type="ordered locus">SCO2595</name>
    <name type="ORF">SCC88.06c</name>
</gene>
<evidence type="ECO:0000255" key="1">
    <source>
        <dbReference type="HAMAP-Rule" id="MF_01454"/>
    </source>
</evidence>
<evidence type="ECO:0000255" key="2">
    <source>
        <dbReference type="PROSITE-ProRule" id="PRU01229"/>
    </source>
</evidence>
<evidence type="ECO:0000255" key="3">
    <source>
        <dbReference type="PROSITE-ProRule" id="PRU01231"/>
    </source>
</evidence>
<evidence type="ECO:0000256" key="4">
    <source>
        <dbReference type="SAM" id="MobiDB-lite"/>
    </source>
</evidence>
<evidence type="ECO:0000269" key="5">
    <source>
    </source>
</evidence>
<organism>
    <name type="scientific">Streptomyces coelicolor (strain ATCC BAA-471 / A3(2) / M145)</name>
    <dbReference type="NCBI Taxonomy" id="100226"/>
    <lineage>
        <taxon>Bacteria</taxon>
        <taxon>Bacillati</taxon>
        <taxon>Actinomycetota</taxon>
        <taxon>Actinomycetes</taxon>
        <taxon>Kitasatosporales</taxon>
        <taxon>Streptomycetaceae</taxon>
        <taxon>Streptomyces</taxon>
        <taxon>Streptomyces albidoflavus group</taxon>
    </lineage>
</organism>
<accession>P95722</accession>
<proteinExistence type="evidence at protein level"/>
<reference key="1">
    <citation type="journal article" date="1997" name="J. Bacteriol.">
        <title>Molecular cloning and characterization of the obg gene of Streptomyces griseus in relation to the onset of morphological differentiation.</title>
        <authorList>
            <person name="Okamoto S."/>
            <person name="Itoh M."/>
            <person name="Ochi K."/>
        </authorList>
    </citation>
    <scope>NUCLEOTIDE SEQUENCE [GENOMIC DNA]</scope>
    <source>
        <strain>ATCC BAA-471 / A3(2) / M145</strain>
    </source>
</reference>
<reference key="2">
    <citation type="journal article" date="2002" name="Nature">
        <title>Complete genome sequence of the model actinomycete Streptomyces coelicolor A3(2).</title>
        <authorList>
            <person name="Bentley S.D."/>
            <person name="Chater K.F."/>
            <person name="Cerdeno-Tarraga A.-M."/>
            <person name="Challis G.L."/>
            <person name="Thomson N.R."/>
            <person name="James K.D."/>
            <person name="Harris D.E."/>
            <person name="Quail M.A."/>
            <person name="Kieser H."/>
            <person name="Harper D."/>
            <person name="Bateman A."/>
            <person name="Brown S."/>
            <person name="Chandra G."/>
            <person name="Chen C.W."/>
            <person name="Collins M."/>
            <person name="Cronin A."/>
            <person name="Fraser A."/>
            <person name="Goble A."/>
            <person name="Hidalgo J."/>
            <person name="Hornsby T."/>
            <person name="Howarth S."/>
            <person name="Huang C.-H."/>
            <person name="Kieser T."/>
            <person name="Larke L."/>
            <person name="Murphy L.D."/>
            <person name="Oliver K."/>
            <person name="O'Neil S."/>
            <person name="Rabbinowitsch E."/>
            <person name="Rajandream M.A."/>
            <person name="Rutherford K.M."/>
            <person name="Rutter S."/>
            <person name="Seeger K."/>
            <person name="Saunders D."/>
            <person name="Sharp S."/>
            <person name="Squares R."/>
            <person name="Squares S."/>
            <person name="Taylor K."/>
            <person name="Warren T."/>
            <person name="Wietzorrek A."/>
            <person name="Woodward J.R."/>
            <person name="Barrell B.G."/>
            <person name="Parkhill J."/>
            <person name="Hopwood D.A."/>
        </authorList>
    </citation>
    <scope>NUCLEOTIDE SEQUENCE [LARGE SCALE GENOMIC DNA]</scope>
    <source>
        <strain>ATCC BAA-471 / A3(2) / M145</strain>
    </source>
</reference>
<reference key="3">
    <citation type="journal article" date="1998" name="Mol. Microbiol.">
        <title>An essential GTP-binding protein functions as a regulator for differentiation in Streptomyces coelicolor.</title>
        <authorList>
            <person name="Okamoto S."/>
            <person name="Ochi K."/>
        </authorList>
    </citation>
    <scope>FUNCTION</scope>
    <scope>INDUCTION</scope>
    <scope>SUBCELLULAR LOCATION</scope>
    <scope>OVEREXPRESSION</scope>
    <scope>DISRUPTION PHENOTYPE</scope>
    <scope>MUTAGENESIS OF PRO-168; GLY-171; LYS-172; SER-173; LEU-281 AND ASP-285</scope>
</reference>
<reference key="4">
    <citation type="journal article" date="2005" name="Dev. Cell">
        <title>Obg/CtgA, a signaling protein that controls replication, translation, and morphological development?</title>
        <authorList>
            <person name="Michel B."/>
        </authorList>
    </citation>
    <scope>REVIEW</scope>
</reference>
<comment type="function">
    <text evidence="5">Plays an unknown essential role and a regulatory role in sporulation. Overexpression suppresses sporulation although cell growth rate was not reduced. Impaired differentiation was eliminated by addition of decoyinine, an inhibitor of GMP synthesis. Overexpression has no effect on undecylprodigiosin production, but decreases actinorhodin production.</text>
</comment>
<comment type="function">
    <text evidence="1">An essential GTPase which binds GTP, GDP and possibly (p)ppGpp with moderate affinity, with high nucleotide exchange rates and a fairly low GTP hydrolysis rate. Plays a role in control of the cell cycle, stress response, ribosome biogenesis and in those bacteria that undergo differentiation, in morphogenesis control.</text>
</comment>
<comment type="cofactor">
    <cofactor evidence="1">
        <name>Mg(2+)</name>
        <dbReference type="ChEBI" id="CHEBI:18420"/>
    </cofactor>
</comment>
<comment type="subunit">
    <text evidence="1">Monomer.</text>
</comment>
<comment type="subcellular location">
    <subcellularLocation>
        <location evidence="1 5">Cytoplasm</location>
    </subcellularLocation>
    <subcellularLocation>
        <location evidence="5">Cell membrane</location>
        <topology evidence="5">Peripheral membrane protein</topology>
    </subcellularLocation>
    <text>No longer associated with the cell membrane after salt-washing.</text>
</comment>
<comment type="induction">
    <text evidence="5">Expressed during vegetative growth it disappears during stationary phase and sporulation (at protein level).</text>
</comment>
<comment type="disruption phenotype">
    <text evidence="5">Essential for growth, it cannot be disrupted.</text>
</comment>
<comment type="similarity">
    <text evidence="1">Belongs to the TRAFAC class OBG-HflX-like GTPase superfamily. OBG GTPase family.</text>
</comment>
<sequence>MTTFVDRVELHVAAGNGGHGCASVHREKFKPLGGPDGGNGGRGGDVILTVDQSVTTLLDYHHSPHRKATNGKPGEGGNRSGKDGQDLVLPVPDGTVVLDGAGNVLADLVGHGTSYVAAQGGRGGLGNAALASARRKAPGFALLGEPGDLQDIHLELKTVADVALVGYPSAGKSSLISVLSAAKPKIADYPFTTLVPNLGVVTAGETVYTVADVPGLIPGASQGKGLGLEFLRHVERCSVLVHVLDTATLESERDPLSDLDVIETELREYGGLDNRPRIVVLNKIDVPDGKDLAEMVRPDLEARGYRVFEVSAVAHMGLRELSFALAELVATARAARPKEEATRIVIRPKAVDDAGFTVTREEDGLFRVRGEKPERWVRQTDFNNDEAVGYLSDRLNRLGVEDKLMKAGARNGDGVAIGPEDNAVVFDWEPSVTAGAEMLGRRGEDHRFEAPRPAAQRRRDRDAERDEAQQEFDGFEPF</sequence>
<dbReference type="EC" id="3.6.5.-" evidence="1"/>
<dbReference type="EMBL" id="D87915">
    <property type="protein sequence ID" value="BAA13498.1"/>
    <property type="molecule type" value="Genomic_DNA"/>
</dbReference>
<dbReference type="EMBL" id="AL939113">
    <property type="protein sequence ID" value="CAB75376.1"/>
    <property type="molecule type" value="Genomic_DNA"/>
</dbReference>
<dbReference type="PIR" id="T42036">
    <property type="entry name" value="T42036"/>
</dbReference>
<dbReference type="RefSeq" id="NP_626832.1">
    <property type="nucleotide sequence ID" value="NC_003888.3"/>
</dbReference>
<dbReference type="SMR" id="P95722"/>
<dbReference type="FunCoup" id="P95722">
    <property type="interactions" value="314"/>
</dbReference>
<dbReference type="STRING" id="100226.gene:17760199"/>
<dbReference type="PaxDb" id="100226-SCO2595"/>
<dbReference type="KEGG" id="sco:SCO2595"/>
<dbReference type="PATRIC" id="fig|100226.15.peg.2641"/>
<dbReference type="eggNOG" id="COG0536">
    <property type="taxonomic scope" value="Bacteria"/>
</dbReference>
<dbReference type="HOGENOM" id="CLU_011747_1_3_11"/>
<dbReference type="InParanoid" id="P95722"/>
<dbReference type="OrthoDB" id="9807318at2"/>
<dbReference type="PhylomeDB" id="P95722"/>
<dbReference type="Proteomes" id="UP000001973">
    <property type="component" value="Chromosome"/>
</dbReference>
<dbReference type="GO" id="GO:0005737">
    <property type="term" value="C:cytoplasm"/>
    <property type="evidence" value="ECO:0007669"/>
    <property type="project" value="UniProtKB-SubCell"/>
</dbReference>
<dbReference type="GO" id="GO:0005886">
    <property type="term" value="C:plasma membrane"/>
    <property type="evidence" value="ECO:0007669"/>
    <property type="project" value="UniProtKB-SubCell"/>
</dbReference>
<dbReference type="GO" id="GO:0005525">
    <property type="term" value="F:GTP binding"/>
    <property type="evidence" value="ECO:0000318"/>
    <property type="project" value="GO_Central"/>
</dbReference>
<dbReference type="GO" id="GO:0003924">
    <property type="term" value="F:GTPase activity"/>
    <property type="evidence" value="ECO:0000318"/>
    <property type="project" value="GO_Central"/>
</dbReference>
<dbReference type="GO" id="GO:0000287">
    <property type="term" value="F:magnesium ion binding"/>
    <property type="evidence" value="ECO:0007669"/>
    <property type="project" value="InterPro"/>
</dbReference>
<dbReference type="GO" id="GO:0042254">
    <property type="term" value="P:ribosome biogenesis"/>
    <property type="evidence" value="ECO:0007669"/>
    <property type="project" value="UniProtKB-UniRule"/>
</dbReference>
<dbReference type="CDD" id="cd01898">
    <property type="entry name" value="Obg"/>
    <property type="match status" value="1"/>
</dbReference>
<dbReference type="FunFam" id="2.70.210.12:FF:000001">
    <property type="entry name" value="GTPase Obg"/>
    <property type="match status" value="1"/>
</dbReference>
<dbReference type="Gene3D" id="3.30.300.350">
    <property type="entry name" value="GTP-binding protein OBG, C-terminal domain"/>
    <property type="match status" value="1"/>
</dbReference>
<dbReference type="Gene3D" id="2.70.210.12">
    <property type="entry name" value="GTP1/OBG domain"/>
    <property type="match status" value="1"/>
</dbReference>
<dbReference type="Gene3D" id="3.40.50.300">
    <property type="entry name" value="P-loop containing nucleotide triphosphate hydrolases"/>
    <property type="match status" value="1"/>
</dbReference>
<dbReference type="HAMAP" id="MF_01454">
    <property type="entry name" value="GTPase_Obg"/>
    <property type="match status" value="1"/>
</dbReference>
<dbReference type="InterPro" id="IPR031167">
    <property type="entry name" value="G_OBG"/>
</dbReference>
<dbReference type="InterPro" id="IPR006073">
    <property type="entry name" value="GTP-bd"/>
</dbReference>
<dbReference type="InterPro" id="IPR014100">
    <property type="entry name" value="GTP-bd_Obg/CgtA"/>
</dbReference>
<dbReference type="InterPro" id="IPR036346">
    <property type="entry name" value="GTP-bd_prot_GTP1/OBG_C_sf"/>
</dbReference>
<dbReference type="InterPro" id="IPR006074">
    <property type="entry name" value="GTP1-OBG_CS"/>
</dbReference>
<dbReference type="InterPro" id="IPR006169">
    <property type="entry name" value="GTP1_OBG_dom"/>
</dbReference>
<dbReference type="InterPro" id="IPR036726">
    <property type="entry name" value="GTP1_OBG_dom_sf"/>
</dbReference>
<dbReference type="InterPro" id="IPR045086">
    <property type="entry name" value="OBG_GTPase"/>
</dbReference>
<dbReference type="InterPro" id="IPR015349">
    <property type="entry name" value="OCT_dom"/>
</dbReference>
<dbReference type="InterPro" id="IPR027417">
    <property type="entry name" value="P-loop_NTPase"/>
</dbReference>
<dbReference type="NCBIfam" id="TIGR02729">
    <property type="entry name" value="Obg_CgtA"/>
    <property type="match status" value="1"/>
</dbReference>
<dbReference type="NCBIfam" id="TIGR03595">
    <property type="entry name" value="Obg_CgtA_exten"/>
    <property type="match status" value="1"/>
</dbReference>
<dbReference type="NCBIfam" id="NF008954">
    <property type="entry name" value="PRK12296.1"/>
    <property type="match status" value="1"/>
</dbReference>
<dbReference type="NCBIfam" id="NF008955">
    <property type="entry name" value="PRK12297.1"/>
    <property type="match status" value="1"/>
</dbReference>
<dbReference type="NCBIfam" id="NF008956">
    <property type="entry name" value="PRK12299.1"/>
    <property type="match status" value="1"/>
</dbReference>
<dbReference type="PANTHER" id="PTHR11702">
    <property type="entry name" value="DEVELOPMENTALLY REGULATED GTP-BINDING PROTEIN-RELATED"/>
    <property type="match status" value="1"/>
</dbReference>
<dbReference type="PANTHER" id="PTHR11702:SF31">
    <property type="entry name" value="MITOCHONDRIAL RIBOSOME-ASSOCIATED GTPASE 2"/>
    <property type="match status" value="1"/>
</dbReference>
<dbReference type="Pfam" id="PF09269">
    <property type="entry name" value="DUF1967"/>
    <property type="match status" value="1"/>
</dbReference>
<dbReference type="Pfam" id="PF01018">
    <property type="entry name" value="GTP1_OBG"/>
    <property type="match status" value="1"/>
</dbReference>
<dbReference type="Pfam" id="PF01926">
    <property type="entry name" value="MMR_HSR1"/>
    <property type="match status" value="1"/>
</dbReference>
<dbReference type="PRINTS" id="PR00326">
    <property type="entry name" value="GTP1OBG"/>
</dbReference>
<dbReference type="SUPFAM" id="SSF102741">
    <property type="entry name" value="Obg GTP-binding protein C-terminal domain"/>
    <property type="match status" value="1"/>
</dbReference>
<dbReference type="SUPFAM" id="SSF82051">
    <property type="entry name" value="Obg GTP-binding protein N-terminal domain"/>
    <property type="match status" value="1"/>
</dbReference>
<dbReference type="SUPFAM" id="SSF52540">
    <property type="entry name" value="P-loop containing nucleoside triphosphate hydrolases"/>
    <property type="match status" value="1"/>
</dbReference>
<dbReference type="PROSITE" id="PS51710">
    <property type="entry name" value="G_OBG"/>
    <property type="match status" value="1"/>
</dbReference>
<dbReference type="PROSITE" id="PS00905">
    <property type="entry name" value="GTP1_OBG"/>
    <property type="match status" value="1"/>
</dbReference>
<dbReference type="PROSITE" id="PS51883">
    <property type="entry name" value="OBG"/>
    <property type="match status" value="1"/>
</dbReference>
<dbReference type="PROSITE" id="PS51881">
    <property type="entry name" value="OCT"/>
    <property type="match status" value="1"/>
</dbReference>